<reference key="1">
    <citation type="journal article" date="1989" name="Nucleic Acids Res.">
        <title>Sequence of the flavodoxin gene from Anabaena variabilis 7120.</title>
        <authorList>
            <person name="Leonhardt K.G."/>
            <person name="Straus N.A."/>
        </authorList>
    </citation>
    <scope>NUCLEOTIDE SEQUENCE [GENOMIC DNA]</scope>
</reference>
<reference key="2">
    <citation type="journal article" date="2001" name="DNA Res.">
        <title>Complete genomic sequence of the filamentous nitrogen-fixing cyanobacterium Anabaena sp. strain PCC 7120.</title>
        <authorList>
            <person name="Kaneko T."/>
            <person name="Nakamura Y."/>
            <person name="Wolk C.P."/>
            <person name="Kuritz T."/>
            <person name="Sasamoto S."/>
            <person name="Watanabe A."/>
            <person name="Iriguchi M."/>
            <person name="Ishikawa A."/>
            <person name="Kawashima K."/>
            <person name="Kimura T."/>
            <person name="Kishida Y."/>
            <person name="Kohara M."/>
            <person name="Matsumoto M."/>
            <person name="Matsuno A."/>
            <person name="Muraki A."/>
            <person name="Nakazaki N."/>
            <person name="Shimpo S."/>
            <person name="Sugimoto M."/>
            <person name="Takazawa M."/>
            <person name="Yamada M."/>
            <person name="Yasuda M."/>
            <person name="Tabata S."/>
        </authorList>
    </citation>
    <scope>NUCLEOTIDE SEQUENCE [LARGE SCALE GENOMIC DNA]</scope>
    <source>
        <strain>PCC 7120 / SAG 25.82 / UTEX 2576</strain>
    </source>
</reference>
<reference key="3">
    <citation type="journal article" date="1990" name="Biochemistry">
        <title>Hydrogen-1, carbon-13, and nitrogen-15 NMR spectroscopy of Anabaena 7120 flavodoxin: assignment of beta-sheet and flavin binding site resonances and analysis of protein-flavin interactions.</title>
        <authorList>
            <person name="Stockman B.J."/>
            <person name="Krezel A.M."/>
            <person name="Markley J.L."/>
            <person name="Leonhardt K.G."/>
            <person name="Straus N.A."/>
        </authorList>
    </citation>
    <scope>STRUCTURE BY NMR</scope>
</reference>
<reference key="4">
    <citation type="journal article" date="1992" name="Protein Sci.">
        <title>Structure of the oxidized long-chain flavodoxin from Anabaena 7120 at 2-A resolution.</title>
        <authorList>
            <person name="Rao S.T."/>
            <person name="Shaffie F."/>
            <person name="Yu C."/>
            <person name="Satyshur K.A."/>
            <person name="Stockman B.J."/>
            <person name="Markley J.L."/>
            <person name="Sundaralingam M."/>
        </authorList>
    </citation>
    <scope>X-RAY CRYSTALLOGRAPHY (2.0 ANGSTROMS)</scope>
</reference>
<reference key="5">
    <citation type="journal article" date="1995" name="Acta Crystallogr. D">
        <title>Structure of the trigonal form of recombinant oxidized flavodoxin from Anabaena 7120 at 1.40-A resolution.</title>
        <authorList>
            <person name="Burkhart B.M."/>
            <person name="Ramakrishnan B."/>
            <person name="Yan H."/>
            <person name="Reedstrom R.J."/>
            <person name="Markley J.L."/>
            <person name="Straus N.A."/>
            <person name="Sundaralingam M."/>
        </authorList>
    </citation>
    <scope>X-RAY CRYSTALLOGRAPHY (1.4 ANGSTROMS)</scope>
</reference>
<name>FLAV_NOSS1</name>
<evidence type="ECO:0000250" key="1"/>
<evidence type="ECO:0000255" key="2">
    <source>
        <dbReference type="PROSITE-ProRule" id="PRU00088"/>
    </source>
</evidence>
<evidence type="ECO:0000305" key="3"/>
<evidence type="ECO:0007829" key="4">
    <source>
        <dbReference type="PDB" id="1RCF"/>
    </source>
</evidence>
<feature type="initiator methionine" description="Removed" evidence="1">
    <location>
        <position position="1"/>
    </location>
</feature>
<feature type="chain" id="PRO_0000171601" description="Flavodoxin">
    <location>
        <begin position="2"/>
        <end position="170"/>
    </location>
</feature>
<feature type="domain" description="Flavodoxin-like" evidence="2">
    <location>
        <begin position="5"/>
        <end position="165"/>
    </location>
</feature>
<feature type="strand" evidence="4">
    <location>
        <begin position="5"/>
        <end position="9"/>
    </location>
</feature>
<feature type="strand" evidence="4">
    <location>
        <begin position="12"/>
        <end position="14"/>
    </location>
</feature>
<feature type="helix" evidence="4">
    <location>
        <begin position="15"/>
        <end position="26"/>
    </location>
</feature>
<feature type="turn" evidence="4">
    <location>
        <begin position="27"/>
        <end position="29"/>
    </location>
</feature>
<feature type="strand" evidence="4">
    <location>
        <begin position="32"/>
        <end position="36"/>
    </location>
</feature>
<feature type="helix" evidence="4">
    <location>
        <begin position="42"/>
        <end position="47"/>
    </location>
</feature>
<feature type="strand" evidence="4">
    <location>
        <begin position="49"/>
        <end position="54"/>
    </location>
</feature>
<feature type="turn" evidence="4">
    <location>
        <begin position="59"/>
        <end position="61"/>
    </location>
</feature>
<feature type="helix" evidence="4">
    <location>
        <begin position="65"/>
        <end position="71"/>
    </location>
</feature>
<feature type="helix" evidence="4">
    <location>
        <begin position="72"/>
        <end position="76"/>
    </location>
</feature>
<feature type="strand" evidence="4">
    <location>
        <begin position="83"/>
        <end position="89"/>
    </location>
</feature>
<feature type="turn" evidence="4">
    <location>
        <begin position="92"/>
        <end position="97"/>
    </location>
</feature>
<feature type="helix" evidence="4">
    <location>
        <begin position="101"/>
        <end position="112"/>
    </location>
</feature>
<feature type="strand" evidence="4">
    <location>
        <begin position="138"/>
        <end position="144"/>
    </location>
</feature>
<feature type="turn" evidence="4">
    <location>
        <begin position="146"/>
        <end position="148"/>
    </location>
</feature>
<feature type="helix" evidence="4">
    <location>
        <begin position="150"/>
        <end position="152"/>
    </location>
</feature>
<feature type="helix" evidence="4">
    <location>
        <begin position="153"/>
        <end position="167"/>
    </location>
</feature>
<accession>P0A3D9</accession>
<accession>P11241</accession>
<comment type="function">
    <text>Low-potential electron donor to a number of redox enzymes.</text>
</comment>
<comment type="cofactor">
    <cofactor>
        <name>FMN</name>
        <dbReference type="ChEBI" id="CHEBI:58210"/>
    </cofactor>
</comment>
<comment type="similarity">
    <text evidence="3">Belongs to the flavodoxin family.</text>
</comment>
<organism>
    <name type="scientific">Nostoc sp. (strain PCC 7120 / SAG 25.82 / UTEX 2576)</name>
    <dbReference type="NCBI Taxonomy" id="103690"/>
    <lineage>
        <taxon>Bacteria</taxon>
        <taxon>Bacillati</taxon>
        <taxon>Cyanobacteriota</taxon>
        <taxon>Cyanophyceae</taxon>
        <taxon>Nostocales</taxon>
        <taxon>Nostocaceae</taxon>
        <taxon>Nostoc</taxon>
    </lineage>
</organism>
<dbReference type="EMBL" id="X14577">
    <property type="protein sequence ID" value="CAA32720.1"/>
    <property type="molecule type" value="Genomic_DNA"/>
</dbReference>
<dbReference type="EMBL" id="BA000019">
    <property type="protein sequence ID" value="BAB74104.1"/>
    <property type="molecule type" value="Genomic_DNA"/>
</dbReference>
<dbReference type="PIR" id="AF2106">
    <property type="entry name" value="AF2106"/>
</dbReference>
<dbReference type="PDB" id="1FLV">
    <property type="method" value="X-ray"/>
    <property type="resolution" value="2.00 A"/>
    <property type="chains" value="A=2-170"/>
</dbReference>
<dbReference type="PDB" id="1RCF">
    <property type="method" value="X-ray"/>
    <property type="resolution" value="1.40 A"/>
    <property type="chains" value="A=2-170"/>
</dbReference>
<dbReference type="PDBsum" id="1FLV"/>
<dbReference type="PDBsum" id="1RCF"/>
<dbReference type="BMRB" id="P0A3D9"/>
<dbReference type="SMR" id="P0A3D9"/>
<dbReference type="STRING" id="103690.gene:10494435"/>
<dbReference type="DrugBank" id="DB03247">
    <property type="generic name" value="Flavin mononucleotide"/>
</dbReference>
<dbReference type="KEGG" id="ana:alr2405"/>
<dbReference type="eggNOG" id="COG0716">
    <property type="taxonomic scope" value="Bacteria"/>
</dbReference>
<dbReference type="OrthoDB" id="9790745at2"/>
<dbReference type="EvolutionaryTrace" id="P0A3D9"/>
<dbReference type="Proteomes" id="UP000002483">
    <property type="component" value="Chromosome"/>
</dbReference>
<dbReference type="GO" id="GO:0009055">
    <property type="term" value="F:electron transfer activity"/>
    <property type="evidence" value="ECO:0007669"/>
    <property type="project" value="InterPro"/>
</dbReference>
<dbReference type="GO" id="GO:0010181">
    <property type="term" value="F:FMN binding"/>
    <property type="evidence" value="ECO:0007669"/>
    <property type="project" value="InterPro"/>
</dbReference>
<dbReference type="FunFam" id="3.40.50.360:FF:000094">
    <property type="entry name" value="Flavodoxin"/>
    <property type="match status" value="1"/>
</dbReference>
<dbReference type="Gene3D" id="3.40.50.360">
    <property type="match status" value="1"/>
</dbReference>
<dbReference type="InterPro" id="IPR050619">
    <property type="entry name" value="Flavodoxin"/>
</dbReference>
<dbReference type="InterPro" id="IPR008254">
    <property type="entry name" value="Flavodoxin/NO_synth"/>
</dbReference>
<dbReference type="InterPro" id="IPR001226">
    <property type="entry name" value="Flavodoxin_CS"/>
</dbReference>
<dbReference type="InterPro" id="IPR010086">
    <property type="entry name" value="Flavodoxin_lc"/>
</dbReference>
<dbReference type="InterPro" id="IPR029039">
    <property type="entry name" value="Flavoprotein-like_sf"/>
</dbReference>
<dbReference type="NCBIfam" id="TIGR01752">
    <property type="entry name" value="flav_long"/>
    <property type="match status" value="1"/>
</dbReference>
<dbReference type="NCBIfam" id="NF006736">
    <property type="entry name" value="PRK09267.1-2"/>
    <property type="match status" value="1"/>
</dbReference>
<dbReference type="NCBIfam" id="NF006738">
    <property type="entry name" value="PRK09267.1-4"/>
    <property type="match status" value="1"/>
</dbReference>
<dbReference type="NCBIfam" id="NF006739">
    <property type="entry name" value="PRK09267.1-5"/>
    <property type="match status" value="1"/>
</dbReference>
<dbReference type="PANTHER" id="PTHR42809:SF1">
    <property type="entry name" value="FLAVODOXIN 1"/>
    <property type="match status" value="1"/>
</dbReference>
<dbReference type="PANTHER" id="PTHR42809">
    <property type="entry name" value="FLAVODOXIN 2"/>
    <property type="match status" value="1"/>
</dbReference>
<dbReference type="Pfam" id="PF00258">
    <property type="entry name" value="Flavodoxin_1"/>
    <property type="match status" value="1"/>
</dbReference>
<dbReference type="PIRSF" id="PIRSF038996">
    <property type="entry name" value="FldA"/>
    <property type="match status" value="1"/>
</dbReference>
<dbReference type="SUPFAM" id="SSF52218">
    <property type="entry name" value="Flavoproteins"/>
    <property type="match status" value="1"/>
</dbReference>
<dbReference type="PROSITE" id="PS00201">
    <property type="entry name" value="FLAVODOXIN"/>
    <property type="match status" value="1"/>
</dbReference>
<dbReference type="PROSITE" id="PS50902">
    <property type="entry name" value="FLAVODOXIN_LIKE"/>
    <property type="match status" value="1"/>
</dbReference>
<protein>
    <recommendedName>
        <fullName>Flavodoxin</fullName>
    </recommendedName>
</protein>
<gene>
    <name type="primary">isiB</name>
    <name type="ordered locus">alr2405</name>
</gene>
<keyword id="KW-0002">3D-structure</keyword>
<keyword id="KW-0249">Electron transport</keyword>
<keyword id="KW-0285">Flavoprotein</keyword>
<keyword id="KW-0288">FMN</keyword>
<keyword id="KW-1185">Reference proteome</keyword>
<keyword id="KW-0813">Transport</keyword>
<sequence length="170" mass="18964">MSKKIGLFYGTQTGKTESVAEIIRDEFGNDVVTLHDVSQAEVTDLNDYQYLIIGCPTWNIGELQSDWEGLYSELDDVDFNGKLVAYFGTGDQIGYADNFQDAIGILEEKISQRGGKTVGYWSTDGYDFNDSKALRNGKFVGLALDEDNQSDLTDDRIKSWVAQLKSEFGL</sequence>
<proteinExistence type="evidence at protein level"/>